<sequence length="191" mass="21468">MLLSDKDIRAEIDAGRVRIDPYDPSMVQPSSIDVRLDRYFRVFENHRYPHIDPAVEQPDLTRTVEPEGDEAFILHPGEFVLASTYEVISLPDDLASRLEGKSSLGRLGLVTHSTAGFIDPGFSGHVTLELSNLATLPIKLWPGMKIGQLCLFKLTSSAEFPYGSERYESRYQGQRGPTASRSFQNFHRTQV</sequence>
<dbReference type="EC" id="3.5.4.30" evidence="1"/>
<dbReference type="EMBL" id="AP009493">
    <property type="protein sequence ID" value="BAG20269.1"/>
    <property type="molecule type" value="Genomic_DNA"/>
</dbReference>
<dbReference type="RefSeq" id="WP_003967584.1">
    <property type="nucleotide sequence ID" value="NC_010572.1"/>
</dbReference>
<dbReference type="SMR" id="B1VMF9"/>
<dbReference type="GeneID" id="95482611"/>
<dbReference type="KEGG" id="sgr:SGR_3440"/>
<dbReference type="eggNOG" id="COG0717">
    <property type="taxonomic scope" value="Bacteria"/>
</dbReference>
<dbReference type="HOGENOM" id="CLU_087476_2_0_11"/>
<dbReference type="UniPathway" id="UPA00610">
    <property type="reaction ID" value="UER00667"/>
</dbReference>
<dbReference type="Proteomes" id="UP000001685">
    <property type="component" value="Chromosome"/>
</dbReference>
<dbReference type="GO" id="GO:0033973">
    <property type="term" value="F:dCTP deaminase (dUMP-forming) activity"/>
    <property type="evidence" value="ECO:0007669"/>
    <property type="project" value="UniProtKB-UniRule"/>
</dbReference>
<dbReference type="GO" id="GO:0008829">
    <property type="term" value="F:dCTP deaminase activity"/>
    <property type="evidence" value="ECO:0007669"/>
    <property type="project" value="InterPro"/>
</dbReference>
<dbReference type="GO" id="GO:0000166">
    <property type="term" value="F:nucleotide binding"/>
    <property type="evidence" value="ECO:0007669"/>
    <property type="project" value="UniProtKB-KW"/>
</dbReference>
<dbReference type="GO" id="GO:0006226">
    <property type="term" value="P:dUMP biosynthetic process"/>
    <property type="evidence" value="ECO:0007669"/>
    <property type="project" value="UniProtKB-UniRule"/>
</dbReference>
<dbReference type="GO" id="GO:0006229">
    <property type="term" value="P:dUTP biosynthetic process"/>
    <property type="evidence" value="ECO:0007669"/>
    <property type="project" value="InterPro"/>
</dbReference>
<dbReference type="GO" id="GO:0015949">
    <property type="term" value="P:nucleobase-containing small molecule interconversion"/>
    <property type="evidence" value="ECO:0007669"/>
    <property type="project" value="TreeGrafter"/>
</dbReference>
<dbReference type="CDD" id="cd07557">
    <property type="entry name" value="trimeric_dUTPase"/>
    <property type="match status" value="1"/>
</dbReference>
<dbReference type="FunFam" id="2.70.40.10:FF:000005">
    <property type="entry name" value="dCTP deaminase, dUMP-forming"/>
    <property type="match status" value="1"/>
</dbReference>
<dbReference type="Gene3D" id="2.70.40.10">
    <property type="match status" value="1"/>
</dbReference>
<dbReference type="HAMAP" id="MF_00146">
    <property type="entry name" value="dCTP_deaminase"/>
    <property type="match status" value="1"/>
</dbReference>
<dbReference type="InterPro" id="IPR011962">
    <property type="entry name" value="dCTP_deaminase"/>
</dbReference>
<dbReference type="InterPro" id="IPR036157">
    <property type="entry name" value="dUTPase-like_sf"/>
</dbReference>
<dbReference type="InterPro" id="IPR033704">
    <property type="entry name" value="dUTPase_trimeric"/>
</dbReference>
<dbReference type="NCBIfam" id="TIGR02274">
    <property type="entry name" value="dCTP_deam"/>
    <property type="match status" value="1"/>
</dbReference>
<dbReference type="PANTHER" id="PTHR42680">
    <property type="entry name" value="DCTP DEAMINASE"/>
    <property type="match status" value="1"/>
</dbReference>
<dbReference type="PANTHER" id="PTHR42680:SF3">
    <property type="entry name" value="DCTP DEAMINASE"/>
    <property type="match status" value="1"/>
</dbReference>
<dbReference type="Pfam" id="PF22769">
    <property type="entry name" value="DCD"/>
    <property type="match status" value="1"/>
</dbReference>
<dbReference type="SUPFAM" id="SSF51283">
    <property type="entry name" value="dUTPase-like"/>
    <property type="match status" value="1"/>
</dbReference>
<organism>
    <name type="scientific">Streptomyces griseus subsp. griseus (strain JCM 4626 / CBS 651.72 / NBRC 13350 / KCC S-0626 / ISP 5235)</name>
    <dbReference type="NCBI Taxonomy" id="455632"/>
    <lineage>
        <taxon>Bacteria</taxon>
        <taxon>Bacillati</taxon>
        <taxon>Actinomycetota</taxon>
        <taxon>Actinomycetes</taxon>
        <taxon>Kitasatosporales</taxon>
        <taxon>Streptomycetaceae</taxon>
        <taxon>Streptomyces</taxon>
    </lineage>
</organism>
<reference key="1">
    <citation type="journal article" date="2008" name="J. Bacteriol.">
        <title>Genome sequence of the streptomycin-producing microorganism Streptomyces griseus IFO 13350.</title>
        <authorList>
            <person name="Ohnishi Y."/>
            <person name="Ishikawa J."/>
            <person name="Hara H."/>
            <person name="Suzuki H."/>
            <person name="Ikenoya M."/>
            <person name="Ikeda H."/>
            <person name="Yamashita A."/>
            <person name="Hattori M."/>
            <person name="Horinouchi S."/>
        </authorList>
    </citation>
    <scope>NUCLEOTIDE SEQUENCE [LARGE SCALE GENOMIC DNA]</scope>
    <source>
        <strain>JCM 4626 / CBS 651.72 / NBRC 13350 / KCC S-0626 / ISP 5235</strain>
    </source>
</reference>
<evidence type="ECO:0000255" key="1">
    <source>
        <dbReference type="HAMAP-Rule" id="MF_00146"/>
    </source>
</evidence>
<evidence type="ECO:0000256" key="2">
    <source>
        <dbReference type="SAM" id="MobiDB-lite"/>
    </source>
</evidence>
<feature type="chain" id="PRO_1000096455" description="dCTP deaminase, dUMP-forming">
    <location>
        <begin position="1"/>
        <end position="191"/>
    </location>
</feature>
<feature type="region of interest" description="Disordered" evidence="2">
    <location>
        <begin position="169"/>
        <end position="191"/>
    </location>
</feature>
<feature type="compositionally biased region" description="Polar residues" evidence="2">
    <location>
        <begin position="171"/>
        <end position="191"/>
    </location>
</feature>
<feature type="active site" description="Proton donor/acceptor" evidence="1">
    <location>
        <position position="129"/>
    </location>
</feature>
<feature type="binding site" evidence="1">
    <location>
        <begin position="101"/>
        <end position="106"/>
    </location>
    <ligand>
        <name>dCTP</name>
        <dbReference type="ChEBI" id="CHEBI:61481"/>
    </ligand>
</feature>
<feature type="binding site" evidence="1">
    <location>
        <position position="119"/>
    </location>
    <ligand>
        <name>dCTP</name>
        <dbReference type="ChEBI" id="CHEBI:61481"/>
    </ligand>
</feature>
<feature type="binding site" evidence="1">
    <location>
        <begin position="127"/>
        <end position="129"/>
    </location>
    <ligand>
        <name>dCTP</name>
        <dbReference type="ChEBI" id="CHEBI:61481"/>
    </ligand>
</feature>
<feature type="binding site" evidence="1">
    <location>
        <position position="148"/>
    </location>
    <ligand>
        <name>dCTP</name>
        <dbReference type="ChEBI" id="CHEBI:61481"/>
    </ligand>
</feature>
<feature type="binding site" evidence="1">
    <location>
        <position position="162"/>
    </location>
    <ligand>
        <name>dCTP</name>
        <dbReference type="ChEBI" id="CHEBI:61481"/>
    </ligand>
</feature>
<feature type="binding site" evidence="1">
    <location>
        <position position="174"/>
    </location>
    <ligand>
        <name>dCTP</name>
        <dbReference type="ChEBI" id="CHEBI:61481"/>
    </ligand>
</feature>
<feature type="site" description="Important for bifunctional activity" evidence="1">
    <location>
        <begin position="116"/>
        <end position="117"/>
    </location>
</feature>
<accession>B1VMF9</accession>
<protein>
    <recommendedName>
        <fullName evidence="1">dCTP deaminase, dUMP-forming</fullName>
        <ecNumber evidence="1">3.5.4.30</ecNumber>
    </recommendedName>
    <alternativeName>
        <fullName evidence="1">Bifunctional dCTP deaminase:dUTPase</fullName>
    </alternativeName>
    <alternativeName>
        <fullName evidence="1">DCD-DUT</fullName>
    </alternativeName>
</protein>
<comment type="function">
    <text evidence="1">Bifunctional enzyme that catalyzes both the deamination of dCTP to dUTP and the hydrolysis of dUTP to dUMP without releasing the toxic dUTP intermediate.</text>
</comment>
<comment type="catalytic activity">
    <reaction evidence="1">
        <text>dCTP + 2 H2O = dUMP + NH4(+) + diphosphate</text>
        <dbReference type="Rhea" id="RHEA:19205"/>
        <dbReference type="ChEBI" id="CHEBI:15377"/>
        <dbReference type="ChEBI" id="CHEBI:28938"/>
        <dbReference type="ChEBI" id="CHEBI:33019"/>
        <dbReference type="ChEBI" id="CHEBI:61481"/>
        <dbReference type="ChEBI" id="CHEBI:246422"/>
        <dbReference type="EC" id="3.5.4.30"/>
    </reaction>
</comment>
<comment type="pathway">
    <text evidence="1">Pyrimidine metabolism; dUMP biosynthesis; dUMP from dCTP: step 1/1.</text>
</comment>
<comment type="subunit">
    <text evidence="1">Homotrimer.</text>
</comment>
<comment type="similarity">
    <text evidence="1">Belongs to the dCTP deaminase family.</text>
</comment>
<keyword id="KW-0378">Hydrolase</keyword>
<keyword id="KW-0546">Nucleotide metabolism</keyword>
<keyword id="KW-0547">Nucleotide-binding</keyword>
<proteinExistence type="inferred from homology"/>
<name>DCDB_STRGG</name>
<gene>
    <name evidence="1" type="primary">dcd</name>
    <name type="ordered locus">SGR_3440</name>
</gene>